<accession>Q9LDT3</accession>
<accession>Q9SE21</accession>
<dbReference type="EMBL" id="AF195047">
    <property type="protein sequence ID" value="AAF23754.1"/>
    <property type="molecule type" value="mRNA"/>
</dbReference>
<dbReference type="EMBL" id="AC005292">
    <property type="protein sequence ID" value="AAF87002.1"/>
    <property type="status" value="ALT_INIT"/>
    <property type="molecule type" value="Genomic_DNA"/>
</dbReference>
<dbReference type="EMBL" id="AC007945">
    <property type="protein sequence ID" value="AAF79582.1"/>
    <property type="status" value="ALT_INIT"/>
    <property type="molecule type" value="Genomic_DNA"/>
</dbReference>
<dbReference type="EMBL" id="CP002684">
    <property type="protein sequence ID" value="AEE30385.1"/>
    <property type="molecule type" value="Genomic_DNA"/>
</dbReference>
<dbReference type="RefSeq" id="NP_001320962.1">
    <property type="nucleotide sequence ID" value="NM_001332600.1"/>
</dbReference>
<dbReference type="RefSeq" id="NP_564194.1">
    <property type="nucleotide sequence ID" value="NM_102191.6"/>
</dbReference>
<dbReference type="SMR" id="Q9LDT3"/>
<dbReference type="BioGRID" id="24189">
    <property type="interactions" value="56"/>
</dbReference>
<dbReference type="FunCoup" id="Q9LDT3">
    <property type="interactions" value="1"/>
</dbReference>
<dbReference type="IntAct" id="Q9LDT3">
    <property type="interactions" value="54"/>
</dbReference>
<dbReference type="STRING" id="3702.Q9LDT3"/>
<dbReference type="PaxDb" id="3702-AT1G23420.1"/>
<dbReference type="EnsemblPlants" id="AT1G23420.1">
    <property type="protein sequence ID" value="AT1G23420.1"/>
    <property type="gene ID" value="AT1G23420"/>
</dbReference>
<dbReference type="GeneID" id="838950"/>
<dbReference type="Gramene" id="AT1G23420.1">
    <property type="protein sequence ID" value="AT1G23420.1"/>
    <property type="gene ID" value="AT1G23420"/>
</dbReference>
<dbReference type="KEGG" id="ath:AT1G23420"/>
<dbReference type="Araport" id="AT1G23420"/>
<dbReference type="TAIR" id="AT1G23420">
    <property type="gene designation" value="INO"/>
</dbReference>
<dbReference type="eggNOG" id="ENOG502QQ88">
    <property type="taxonomic scope" value="Eukaryota"/>
</dbReference>
<dbReference type="HOGENOM" id="CLU_071156_0_0_1"/>
<dbReference type="InParanoid" id="Q9LDT3"/>
<dbReference type="OMA" id="PPTQCKG"/>
<dbReference type="OrthoDB" id="667577at2759"/>
<dbReference type="PhylomeDB" id="Q9LDT3"/>
<dbReference type="PRO" id="PR:Q9LDT3"/>
<dbReference type="Proteomes" id="UP000006548">
    <property type="component" value="Chromosome 1"/>
</dbReference>
<dbReference type="ExpressionAtlas" id="Q9LDT3">
    <property type="expression patterns" value="baseline and differential"/>
</dbReference>
<dbReference type="GO" id="GO:0005634">
    <property type="term" value="C:nucleus"/>
    <property type="evidence" value="ECO:0000314"/>
    <property type="project" value="TAIR"/>
</dbReference>
<dbReference type="GO" id="GO:0003677">
    <property type="term" value="F:DNA binding"/>
    <property type="evidence" value="ECO:0007669"/>
    <property type="project" value="UniProtKB-KW"/>
</dbReference>
<dbReference type="GO" id="GO:0003700">
    <property type="term" value="F:DNA-binding transcription factor activity"/>
    <property type="evidence" value="ECO:0000250"/>
    <property type="project" value="TAIR"/>
</dbReference>
<dbReference type="GO" id="GO:0008270">
    <property type="term" value="F:zinc ion binding"/>
    <property type="evidence" value="ECO:0007669"/>
    <property type="project" value="UniProtKB-KW"/>
</dbReference>
<dbReference type="GO" id="GO:0048481">
    <property type="term" value="P:plant ovule development"/>
    <property type="evidence" value="ECO:0000315"/>
    <property type="project" value="TAIR"/>
</dbReference>
<dbReference type="GO" id="GO:0009944">
    <property type="term" value="P:polarity specification of adaxial/abaxial axis"/>
    <property type="evidence" value="ECO:0000314"/>
    <property type="project" value="TAIR"/>
</dbReference>
<dbReference type="CDD" id="cd00084">
    <property type="entry name" value="HMG-box_SF"/>
    <property type="match status" value="1"/>
</dbReference>
<dbReference type="FunFam" id="1.10.30.10:FF:000076">
    <property type="entry name" value="Axial regulator YABBY 4"/>
    <property type="match status" value="1"/>
</dbReference>
<dbReference type="Gene3D" id="1.10.30.10">
    <property type="entry name" value="High mobility group box domain"/>
    <property type="match status" value="1"/>
</dbReference>
<dbReference type="InterPro" id="IPR036910">
    <property type="entry name" value="HMG_box_dom_sf"/>
</dbReference>
<dbReference type="InterPro" id="IPR006780">
    <property type="entry name" value="YABBY"/>
</dbReference>
<dbReference type="InterPro" id="IPR056775">
    <property type="entry name" value="YABBY_C"/>
</dbReference>
<dbReference type="InterPro" id="IPR056776">
    <property type="entry name" value="YABBY_N"/>
</dbReference>
<dbReference type="PANTHER" id="PTHR31675:SF8">
    <property type="entry name" value="AXIAL REGULATOR YABBY 4"/>
    <property type="match status" value="1"/>
</dbReference>
<dbReference type="PANTHER" id="PTHR31675">
    <property type="entry name" value="PROTEIN YABBY 6-RELATED"/>
    <property type="match status" value="1"/>
</dbReference>
<dbReference type="Pfam" id="PF04690">
    <property type="entry name" value="YABBY"/>
    <property type="match status" value="1"/>
</dbReference>
<dbReference type="Pfam" id="PF24868">
    <property type="entry name" value="YABBY_N"/>
    <property type="match status" value="1"/>
</dbReference>
<dbReference type="SUPFAM" id="SSF47095">
    <property type="entry name" value="HMG-box"/>
    <property type="match status" value="1"/>
</dbReference>
<gene>
    <name type="primary">YAB4</name>
    <name type="synonym">INO</name>
    <name type="ordered locus">At1g23420</name>
    <name type="ORF">F26F24.29</name>
    <name type="ORF">F28C11.6</name>
</gene>
<keyword id="KW-0217">Developmental protein</keyword>
<keyword id="KW-0238">DNA-binding</keyword>
<keyword id="KW-0479">Metal-binding</keyword>
<keyword id="KW-0539">Nucleus</keyword>
<keyword id="KW-1185">Reference proteome</keyword>
<keyword id="KW-0862">Zinc</keyword>
<keyword id="KW-0863">Zinc-finger</keyword>
<proteinExistence type="evidence at protein level"/>
<name>YAB4_ARATH</name>
<comment type="function">
    <text evidence="3 4 7 8">Essential for the formation and the abaxial-adaxial asymmetric growth of the ovule outer integument.</text>
</comment>
<comment type="subunit">
    <text evidence="6">Interacts with SPL/NZZ.</text>
</comment>
<comment type="interaction">
    <interactant intactId="EBI-1115523">
        <id>Q9LDT3</id>
    </interactant>
    <interactant intactId="EBI-4464544">
        <id>Q9LMN5</id>
        <label>At1g21200</label>
    </interactant>
    <organismsDiffer>false</organismsDiffer>
    <experiments>4</experiments>
</comment>
<comment type="interaction">
    <interactant intactId="EBI-1115523">
        <id>Q9LDT3</id>
    </interactant>
    <interactant intactId="EBI-4434261">
        <id>Q9LNJ5</id>
        <label>BHLH13</label>
    </interactant>
    <organismsDiffer>false</organismsDiffer>
    <experiments>5</experiments>
</comment>
<comment type="interaction">
    <interactant intactId="EBI-1115523">
        <id>Q9LDT3</id>
    </interactant>
    <interactant intactId="EBI-966009">
        <id>O80340</id>
        <label>ERF4</label>
    </interactant>
    <organismsDiffer>false</organismsDiffer>
    <experiments>5</experiments>
</comment>
<comment type="interaction">
    <interactant intactId="EBI-1115523">
        <id>Q9LDT3</id>
    </interactant>
    <interactant intactId="EBI-2000137">
        <id>Q9MAI5</id>
        <label>ERF8</label>
    </interactant>
    <organismsDiffer>false</organismsDiffer>
    <experiments>3</experiments>
</comment>
<comment type="interaction">
    <interactant intactId="EBI-1115523">
        <id>Q9LDT3</id>
    </interactant>
    <interactant intactId="EBI-15191579">
        <id>Q9C9X7</id>
        <label>IDD14</label>
    </interactant>
    <organismsDiffer>false</organismsDiffer>
    <experiments>3</experiments>
</comment>
<comment type="interaction">
    <interactant intactId="EBI-1115523">
        <id>Q9LDT3</id>
    </interactant>
    <interactant intactId="EBI-15196751">
        <id>Q9M9A3</id>
        <label>MYBS1</label>
    </interactant>
    <organismsDiffer>false</organismsDiffer>
    <experiments>3</experiments>
</comment>
<comment type="interaction">
    <interactant intactId="EBI-1115523">
        <id>Q9LDT3</id>
    </interactant>
    <interactant intactId="EBI-15193945">
        <id>O82595</id>
        <label>NGA4</label>
    </interactant>
    <organismsDiffer>false</organismsDiffer>
    <experiments>3</experiments>
</comment>
<comment type="interaction">
    <interactant intactId="EBI-1115523">
        <id>Q9LDT3</id>
    </interactant>
    <interactant intactId="EBI-1113588">
        <id>O81836</id>
        <label>SPL</label>
    </interactant>
    <organismsDiffer>false</organismsDiffer>
    <experiments>3</experiments>
</comment>
<comment type="interaction">
    <interactant intactId="EBI-1115523">
        <id>Q9LDT3</id>
    </interactant>
    <interactant intactId="EBI-4424877">
        <id>Q9S7W5</id>
        <label>TCP13</label>
    </interactant>
    <organismsDiffer>false</organismsDiffer>
    <experiments>3</experiments>
</comment>
<comment type="interaction">
    <interactant intactId="EBI-1115523">
        <id>Q9LDT3</id>
    </interactant>
    <interactant intactId="EBI-4424563">
        <id>Q93Z00</id>
        <label>TCP14</label>
    </interactant>
    <organismsDiffer>false</organismsDiffer>
    <experiments>4</experiments>
</comment>
<comment type="interaction">
    <interactant intactId="EBI-1115523">
        <id>Q9LDT3</id>
    </interactant>
    <interactant intactId="EBI-4426144">
        <id>Q9C9L2</id>
        <label>TCP15</label>
    </interactant>
    <organismsDiffer>false</organismsDiffer>
    <experiments>5</experiments>
</comment>
<comment type="interaction">
    <interactant intactId="EBI-1115523">
        <id>Q9LDT3</id>
    </interactant>
    <interactant intactId="EBI-15192325">
        <id>Q8LPR5</id>
        <label>TCP4</label>
    </interactant>
    <organismsDiffer>false</organismsDiffer>
    <experiments>3</experiments>
</comment>
<comment type="interaction">
    <interactant intactId="EBI-1115523">
        <id>Q9LDT3</id>
    </interactant>
    <interactant intactId="EBI-3134124">
        <id>Q9C518</id>
        <label>TCP8</label>
    </interactant>
    <organismsDiffer>false</organismsDiffer>
    <experiments>3</experiments>
</comment>
<comment type="interaction">
    <interactant intactId="EBI-1115523">
        <id>Q9LDT3</id>
    </interactant>
    <interactant intactId="EBI-1792431">
        <id>Q9LVI4</id>
        <label>TIFY6B</label>
    </interactant>
    <organismsDiffer>false</organismsDiffer>
    <experiments>5</experiments>
</comment>
<comment type="subcellular location">
    <subcellularLocation>
        <location evidence="4">Nucleus</location>
    </subcellularLocation>
</comment>
<comment type="developmental stage">
    <text evidence="3 4 5">First detected in a group of around 15 epidermal cells on the abaxial half of each ovule primordium (chalaza, outer integument initiation sites). Later present in the outer cell layer of the outer integument on the abaxial side of the ovule primordium. Confined to the chalazal end of the integument and disappears after anthesis. Also present in embryos at the globular stage.</text>
</comment>
<comment type="induction">
    <text evidence="3 4 5">Autoinduction down-regulated by SUP in adaxial region of the ovule outer integument. Negatively and spatially regulated by HLL, ANT, BELL1, NZZ/SPL and SUP.</text>
</comment>
<comment type="similarity">
    <text evidence="9">Belongs to the YABBY family.</text>
</comment>
<comment type="sequence caution" evidence="9">
    <conflict type="erroneous initiation">
        <sequence resource="EMBL-CDS" id="AAF79582"/>
    </conflict>
    <text>Extended N-terminus.</text>
</comment>
<comment type="sequence caution" evidence="9">
    <conflict type="erroneous initiation">
        <sequence resource="EMBL-CDS" id="AAF87002"/>
    </conflict>
    <text>Extended N-terminus.</text>
</comment>
<protein>
    <recommendedName>
        <fullName>Axial regulator YABBY 4</fullName>
    </recommendedName>
    <alternativeName>
        <fullName>Protein INNER NO OUTER</fullName>
    </alternativeName>
</protein>
<feature type="chain" id="PRO_0000133720" description="Axial regulator YABBY 4">
    <location>
        <begin position="1"/>
        <end position="231"/>
    </location>
</feature>
<feature type="zinc finger region" description="C4-type" evidence="1">
    <location>
        <begin position="26"/>
        <end position="53"/>
    </location>
</feature>
<feature type="region of interest" description="Disordered" evidence="2">
    <location>
        <begin position="98"/>
        <end position="120"/>
    </location>
</feature>
<feature type="region of interest" description="Disordered" evidence="2">
    <location>
        <begin position="211"/>
        <end position="231"/>
    </location>
</feature>
<feature type="mutagenesis site" description="In ino-4; reduced development of the ovule outer integument that fails to completely enclose the inner integument and nucellus." evidence="3">
    <original>K</original>
    <variation>KLYWSR</variation>
    <location>
        <position position="147"/>
    </location>
</feature>
<reference key="1">
    <citation type="journal article" date="1999" name="Genes Dev.">
        <title>INNER NO OUTER regulates abaxial-adaxial patterning in Arabidopsis ovules.</title>
        <authorList>
            <person name="Villanueva J.M."/>
            <person name="Broadhvest J."/>
            <person name="Hauser B.A."/>
            <person name="Meister R.J."/>
            <person name="Schneitz K."/>
            <person name="Gasser C.S."/>
        </authorList>
    </citation>
    <scope>NUCLEOTIDE SEQUENCE [MRNA]</scope>
    <scope>FUNCTION</scope>
    <scope>DEVELOPMENTAL STAGE</scope>
    <scope>INDUCTION</scope>
    <scope>MUTAGENESIS OF LYS-147</scope>
    <source>
        <strain>cv. Col-3</strain>
    </source>
</reference>
<reference key="2">
    <citation type="journal article" date="2000" name="Nature">
        <title>Sequence and analysis of chromosome 1 of the plant Arabidopsis thaliana.</title>
        <authorList>
            <person name="Theologis A."/>
            <person name="Ecker J.R."/>
            <person name="Palm C.J."/>
            <person name="Federspiel N.A."/>
            <person name="Kaul S."/>
            <person name="White O."/>
            <person name="Alonso J."/>
            <person name="Altafi H."/>
            <person name="Araujo R."/>
            <person name="Bowman C.L."/>
            <person name="Brooks S.Y."/>
            <person name="Buehler E."/>
            <person name="Chan A."/>
            <person name="Chao Q."/>
            <person name="Chen H."/>
            <person name="Cheuk R.F."/>
            <person name="Chin C.W."/>
            <person name="Chung M.K."/>
            <person name="Conn L."/>
            <person name="Conway A.B."/>
            <person name="Conway A.R."/>
            <person name="Creasy T.H."/>
            <person name="Dewar K."/>
            <person name="Dunn P."/>
            <person name="Etgu P."/>
            <person name="Feldblyum T.V."/>
            <person name="Feng J.-D."/>
            <person name="Fong B."/>
            <person name="Fujii C.Y."/>
            <person name="Gill J.E."/>
            <person name="Goldsmith A.D."/>
            <person name="Haas B."/>
            <person name="Hansen N.F."/>
            <person name="Hughes B."/>
            <person name="Huizar L."/>
            <person name="Hunter J.L."/>
            <person name="Jenkins J."/>
            <person name="Johnson-Hopson C."/>
            <person name="Khan S."/>
            <person name="Khaykin E."/>
            <person name="Kim C.J."/>
            <person name="Koo H.L."/>
            <person name="Kremenetskaia I."/>
            <person name="Kurtz D.B."/>
            <person name="Kwan A."/>
            <person name="Lam B."/>
            <person name="Langin-Hooper S."/>
            <person name="Lee A."/>
            <person name="Lee J.M."/>
            <person name="Lenz C.A."/>
            <person name="Li J.H."/>
            <person name="Li Y.-P."/>
            <person name="Lin X."/>
            <person name="Liu S.X."/>
            <person name="Liu Z.A."/>
            <person name="Luros J.S."/>
            <person name="Maiti R."/>
            <person name="Marziali A."/>
            <person name="Militscher J."/>
            <person name="Miranda M."/>
            <person name="Nguyen M."/>
            <person name="Nierman W.C."/>
            <person name="Osborne B.I."/>
            <person name="Pai G."/>
            <person name="Peterson J."/>
            <person name="Pham P.K."/>
            <person name="Rizzo M."/>
            <person name="Rooney T."/>
            <person name="Rowley D."/>
            <person name="Sakano H."/>
            <person name="Salzberg S.L."/>
            <person name="Schwartz J.R."/>
            <person name="Shinn P."/>
            <person name="Southwick A.M."/>
            <person name="Sun H."/>
            <person name="Tallon L.J."/>
            <person name="Tambunga G."/>
            <person name="Toriumi M.J."/>
            <person name="Town C.D."/>
            <person name="Utterback T."/>
            <person name="Van Aken S."/>
            <person name="Vaysberg M."/>
            <person name="Vysotskaia V.S."/>
            <person name="Walker M."/>
            <person name="Wu D."/>
            <person name="Yu G."/>
            <person name="Fraser C.M."/>
            <person name="Venter J.C."/>
            <person name="Davis R.W."/>
        </authorList>
    </citation>
    <scope>NUCLEOTIDE SEQUENCE [LARGE SCALE GENOMIC DNA]</scope>
    <source>
        <strain>cv. Columbia</strain>
    </source>
</reference>
<reference key="3">
    <citation type="journal article" date="2017" name="Plant J.">
        <title>Araport11: a complete reannotation of the Arabidopsis thaliana reference genome.</title>
        <authorList>
            <person name="Cheng C.Y."/>
            <person name="Krishnakumar V."/>
            <person name="Chan A.P."/>
            <person name="Thibaud-Nissen F."/>
            <person name="Schobel S."/>
            <person name="Town C.D."/>
        </authorList>
    </citation>
    <scope>GENOME REANNOTATION</scope>
    <source>
        <strain>cv. Columbia</strain>
    </source>
</reference>
<reference key="4">
    <citation type="journal article" date="1997" name="Development">
        <title>Dissection of sexual organ ontogenesis: a genetic analysis of ovule development in Arabidopsis thaliana.</title>
        <authorList>
            <person name="Schneitz K."/>
            <person name="Huelskamp M."/>
            <person name="Kopczak S.D."/>
            <person name="Pruitt R.E."/>
        </authorList>
    </citation>
    <scope>FUNCTION</scope>
</reference>
<reference key="5">
    <citation type="journal article" date="1997" name="Genetics">
        <title>Interactions among genes regulating ovule development in Arabidopsis thaliana.</title>
        <authorList>
            <person name="Baker S.C."/>
            <person name="Robinson-Beers K."/>
            <person name="Villanueva J.M."/>
            <person name="Gaiser J.C."/>
            <person name="Gasser C.S."/>
        </authorList>
    </citation>
    <scope>FUNCTION</scope>
</reference>
<reference key="6">
    <citation type="journal article" date="2000" name="Curr. Opin. Plant Biol.">
        <title>The YABBY gene family and abaxial cell fate.</title>
        <authorList>
            <person name="Bowman J.L."/>
        </authorList>
    </citation>
    <scope>GENE FAMILY</scope>
    <scope>NOMENCLATURE</scope>
</reference>
<reference key="7">
    <citation type="journal article" date="2002" name="Development">
        <title>SUPERMAN attenuates positive INNER NO OUTER autoregulation to maintain polar development of Arabidopsis ovule outer integuments.</title>
        <authorList>
            <person name="Meister R.J."/>
            <person name="Kotow L.M."/>
            <person name="Gasser C.S."/>
        </authorList>
    </citation>
    <scope>FUNCTION</scope>
    <scope>DEVELOPMENTAL STAGE</scope>
    <scope>SUBCELLULAR LOCATION</scope>
    <scope>INDUCTION</scope>
</reference>
<reference key="8">
    <citation type="journal article" date="2002" name="Development">
        <title>NOZZLE links proximal-distal and adaxial-abaxial pattern formation during ovule development in Arabidopsis thaliana.</title>
        <authorList>
            <person name="Balasubramanian S."/>
            <person name="Schneitz K."/>
        </authorList>
    </citation>
    <scope>DEVELOPMENTAL STAGE</scope>
    <scope>INDUCTION</scope>
</reference>
<reference key="9">
    <citation type="journal article" date="2004" name="Plant Physiol.">
        <title>Organ polarity in Arabidopsis. NOZZLE physically interacts with members of the YABBY family.</title>
        <authorList>
            <person name="Sieber P."/>
            <person name="Petrascheck M."/>
            <person name="Barberis A."/>
            <person name="Schneitz K."/>
        </authorList>
    </citation>
    <scope>INTERACTION WITH SPL/NZZ</scope>
</reference>
<evidence type="ECO:0000255" key="1"/>
<evidence type="ECO:0000256" key="2">
    <source>
        <dbReference type="SAM" id="MobiDB-lite"/>
    </source>
</evidence>
<evidence type="ECO:0000269" key="3">
    <source>
    </source>
</evidence>
<evidence type="ECO:0000269" key="4">
    <source>
    </source>
</evidence>
<evidence type="ECO:0000269" key="5">
    <source>
    </source>
</evidence>
<evidence type="ECO:0000269" key="6">
    <source>
    </source>
</evidence>
<evidence type="ECO:0000269" key="7">
    <source>
    </source>
</evidence>
<evidence type="ECO:0000269" key="8">
    <source>
    </source>
</evidence>
<evidence type="ECO:0000305" key="9"/>
<sequence length="231" mass="25957">MTKLPNMTTTLNHLFDLPGQICHVQCGFCTTILLVSVPFTSLSMVVTVRCGHCTSLLSVNLMKASFIPLHLLASLSHLDETGKEEVAATDGVEEEAWKVNQEKENSPTTLVSSSDNEDEDVSRVYQVVNKPPEKRQRAPSAYNCFIKEEIRRLKAQNPSMAHKEAFSLAAKNWAHFPPAHNKRAASDQCFCEEDNNAILPCNVFEDHEESNNGFRERKAQRHSIWGKSPFE</sequence>
<organism>
    <name type="scientific">Arabidopsis thaliana</name>
    <name type="common">Mouse-ear cress</name>
    <dbReference type="NCBI Taxonomy" id="3702"/>
    <lineage>
        <taxon>Eukaryota</taxon>
        <taxon>Viridiplantae</taxon>
        <taxon>Streptophyta</taxon>
        <taxon>Embryophyta</taxon>
        <taxon>Tracheophyta</taxon>
        <taxon>Spermatophyta</taxon>
        <taxon>Magnoliopsida</taxon>
        <taxon>eudicotyledons</taxon>
        <taxon>Gunneridae</taxon>
        <taxon>Pentapetalae</taxon>
        <taxon>rosids</taxon>
        <taxon>malvids</taxon>
        <taxon>Brassicales</taxon>
        <taxon>Brassicaceae</taxon>
        <taxon>Camelineae</taxon>
        <taxon>Arabidopsis</taxon>
    </lineage>
</organism>